<gene>
    <name type="primary">cyoB</name>
    <name type="ordered locus">Z0534</name>
    <name type="ordered locus">ECs0485</name>
</gene>
<organism>
    <name type="scientific">Escherichia coli O157:H7</name>
    <dbReference type="NCBI Taxonomy" id="83334"/>
    <lineage>
        <taxon>Bacteria</taxon>
        <taxon>Pseudomonadati</taxon>
        <taxon>Pseudomonadota</taxon>
        <taxon>Gammaproteobacteria</taxon>
        <taxon>Enterobacterales</taxon>
        <taxon>Enterobacteriaceae</taxon>
        <taxon>Escherichia</taxon>
    </lineage>
</organism>
<accession>P0ABJ0</accession>
<accession>P18401</accession>
<dbReference type="EC" id="7.1.1.3" evidence="2"/>
<dbReference type="EMBL" id="AE005174">
    <property type="protein sequence ID" value="AAG54781.1"/>
    <property type="molecule type" value="Genomic_DNA"/>
</dbReference>
<dbReference type="EMBL" id="BA000007">
    <property type="protein sequence ID" value="BAB33908.1"/>
    <property type="molecule type" value="Genomic_DNA"/>
</dbReference>
<dbReference type="PIR" id="A85540">
    <property type="entry name" value="A85540"/>
</dbReference>
<dbReference type="PIR" id="E90689">
    <property type="entry name" value="E90689"/>
</dbReference>
<dbReference type="RefSeq" id="NP_308512.1">
    <property type="nucleotide sequence ID" value="NC_002695.1"/>
</dbReference>
<dbReference type="RefSeq" id="WP_000467180.1">
    <property type="nucleotide sequence ID" value="NZ_VOAI01000005.1"/>
</dbReference>
<dbReference type="SMR" id="P0ABJ0"/>
<dbReference type="STRING" id="155864.Z0534"/>
<dbReference type="GeneID" id="914587"/>
<dbReference type="GeneID" id="93777023"/>
<dbReference type="KEGG" id="ece:Z0534"/>
<dbReference type="KEGG" id="ecs:ECs_0485"/>
<dbReference type="PATRIC" id="fig|386585.9.peg.586"/>
<dbReference type="eggNOG" id="COG0843">
    <property type="taxonomic scope" value="Bacteria"/>
</dbReference>
<dbReference type="HOGENOM" id="CLU_011899_7_1_6"/>
<dbReference type="OMA" id="WAMMSIG"/>
<dbReference type="Proteomes" id="UP000000558">
    <property type="component" value="Chromosome"/>
</dbReference>
<dbReference type="Proteomes" id="UP000002519">
    <property type="component" value="Chromosome"/>
</dbReference>
<dbReference type="GO" id="GO:0005886">
    <property type="term" value="C:plasma membrane"/>
    <property type="evidence" value="ECO:0007669"/>
    <property type="project" value="UniProtKB-SubCell"/>
</dbReference>
<dbReference type="GO" id="GO:0009486">
    <property type="term" value="F:cytochrome bo3 ubiquinol oxidase activity"/>
    <property type="evidence" value="ECO:0007669"/>
    <property type="project" value="UniProtKB-EC"/>
</dbReference>
<dbReference type="GO" id="GO:0004129">
    <property type="term" value="F:cytochrome-c oxidase activity"/>
    <property type="evidence" value="ECO:0007669"/>
    <property type="project" value="InterPro"/>
</dbReference>
<dbReference type="GO" id="GO:0020037">
    <property type="term" value="F:heme binding"/>
    <property type="evidence" value="ECO:0007669"/>
    <property type="project" value="InterPro"/>
</dbReference>
<dbReference type="GO" id="GO:0046872">
    <property type="term" value="F:metal ion binding"/>
    <property type="evidence" value="ECO:0007669"/>
    <property type="project" value="UniProtKB-KW"/>
</dbReference>
<dbReference type="GO" id="GO:0016682">
    <property type="term" value="F:oxidoreductase activity, acting on diphenols and related substances as donors, oxygen as acceptor"/>
    <property type="evidence" value="ECO:0007669"/>
    <property type="project" value="InterPro"/>
</dbReference>
<dbReference type="GO" id="GO:0009060">
    <property type="term" value="P:aerobic respiration"/>
    <property type="evidence" value="ECO:0007669"/>
    <property type="project" value="InterPro"/>
</dbReference>
<dbReference type="GO" id="GO:0015990">
    <property type="term" value="P:electron transport coupled proton transport"/>
    <property type="evidence" value="ECO:0007669"/>
    <property type="project" value="TreeGrafter"/>
</dbReference>
<dbReference type="GO" id="GO:0022904">
    <property type="term" value="P:respiratory electron transport chain"/>
    <property type="evidence" value="ECO:0007669"/>
    <property type="project" value="TreeGrafter"/>
</dbReference>
<dbReference type="CDD" id="cd01662">
    <property type="entry name" value="Ubiquinol_Oxidase_I"/>
    <property type="match status" value="1"/>
</dbReference>
<dbReference type="FunFam" id="1.20.210.10:FF:000002">
    <property type="entry name" value="Cytochrome o ubiquinol oxidase, subunit I"/>
    <property type="match status" value="1"/>
</dbReference>
<dbReference type="Gene3D" id="1.20.210.10">
    <property type="entry name" value="Cytochrome c oxidase-like, subunit I domain"/>
    <property type="match status" value="1"/>
</dbReference>
<dbReference type="InterPro" id="IPR023616">
    <property type="entry name" value="Cyt_c_oxase-like_su1_dom"/>
</dbReference>
<dbReference type="InterPro" id="IPR036927">
    <property type="entry name" value="Cyt_c_oxase-like_su1_sf"/>
</dbReference>
<dbReference type="InterPro" id="IPR000883">
    <property type="entry name" value="Cyt_C_Oxase_1"/>
</dbReference>
<dbReference type="InterPro" id="IPR023615">
    <property type="entry name" value="Cyt_c_Oxase_su1_BS"/>
</dbReference>
<dbReference type="InterPro" id="IPR014207">
    <property type="entry name" value="Cyt_c_ubiqinol_oxidase_su1"/>
</dbReference>
<dbReference type="NCBIfam" id="TIGR02843">
    <property type="entry name" value="CyoB"/>
    <property type="match status" value="1"/>
</dbReference>
<dbReference type="NCBIfam" id="NF011592">
    <property type="entry name" value="PRK15017.1"/>
    <property type="match status" value="1"/>
</dbReference>
<dbReference type="PANTHER" id="PTHR10422:SF35">
    <property type="entry name" value="CYTOCHROME BO(3) UBIQUINOL OXIDASE SUBUNIT 1"/>
    <property type="match status" value="1"/>
</dbReference>
<dbReference type="PANTHER" id="PTHR10422">
    <property type="entry name" value="CYTOCHROME C OXIDASE SUBUNIT 1"/>
    <property type="match status" value="1"/>
</dbReference>
<dbReference type="Pfam" id="PF00115">
    <property type="entry name" value="COX1"/>
    <property type="match status" value="1"/>
</dbReference>
<dbReference type="PRINTS" id="PR01165">
    <property type="entry name" value="CYCOXIDASEI"/>
</dbReference>
<dbReference type="SUPFAM" id="SSF81442">
    <property type="entry name" value="Cytochrome c oxidase subunit I-like"/>
    <property type="match status" value="1"/>
</dbReference>
<dbReference type="PROSITE" id="PS50855">
    <property type="entry name" value="COX1"/>
    <property type="match status" value="1"/>
</dbReference>
<dbReference type="PROSITE" id="PS00077">
    <property type="entry name" value="COX1_CUB"/>
    <property type="match status" value="1"/>
</dbReference>
<comment type="function">
    <text evidence="2">Cytochrome bo(3) ubiquinol oxidase is the terminal enzyme in the aerobic respiratory chain of E.coli that predominates when cells are grown at high aeration. Catalyzes the four-electron reduction of O2 to water, using a ubiquinol as a membrane soluble electron donor for molecular oxygen reduction; ubiquinol-8 is the natural substrate for E.coli. Has proton pump activity across the membrane in addition to electron transfer, pumping 2 protons/electron and generating a proton motive force. All the redox centers of this enzyme complex are located within the largest subunit, subunit I. Protons are probably pumped via D- and K- channels found in this subunit.</text>
</comment>
<comment type="catalytic activity">
    <reaction evidence="2">
        <text>2 a ubiquinol + O2 + n H(+)(in) = 2 a ubiquinone + 2 H2O + n H(+)(out)</text>
        <dbReference type="Rhea" id="RHEA:30251"/>
        <dbReference type="Rhea" id="RHEA-COMP:9565"/>
        <dbReference type="Rhea" id="RHEA-COMP:9566"/>
        <dbReference type="ChEBI" id="CHEBI:15377"/>
        <dbReference type="ChEBI" id="CHEBI:15378"/>
        <dbReference type="ChEBI" id="CHEBI:15379"/>
        <dbReference type="ChEBI" id="CHEBI:16389"/>
        <dbReference type="ChEBI" id="CHEBI:17976"/>
        <dbReference type="EC" id="7.1.1.3"/>
    </reaction>
</comment>
<comment type="cofactor">
    <cofactor evidence="2">
        <name>Cu(2+)</name>
        <dbReference type="ChEBI" id="CHEBI:29036"/>
    </cofactor>
    <text evidence="2">Binds 1 copper B ion per subunit.</text>
</comment>
<comment type="cofactor">
    <cofactor evidence="2">
        <name>heme b</name>
        <dbReference type="ChEBI" id="CHEBI:60344"/>
    </cofactor>
    <text evidence="2">Binds 1 low-spin heme b per subunit.</text>
</comment>
<comment type="cofactor">
    <cofactor evidence="2">
        <name>Fe(II)-heme o</name>
        <dbReference type="ChEBI" id="CHEBI:60530"/>
    </cofactor>
    <text evidence="2">Binds 1 high-spin heme o per subunit, also named heme o(3).</text>
</comment>
<comment type="subunit">
    <text evidence="2">The cytochrome bo(3) ubiquinol oxidase complex is a heterooctamer of two A chains, two B chains, two C chains and two D chains.</text>
</comment>
<comment type="subcellular location">
    <subcellularLocation>
        <location evidence="1">Cell inner membrane</location>
        <topology evidence="1">Multi-pass membrane protein</topology>
    </subcellularLocation>
</comment>
<comment type="miscellaneous">
    <text>Ubiquinol oxidase catalyzes the terminal step in the electron transport chain.</text>
</comment>
<comment type="similarity">
    <text evidence="3">Belongs to the heme-copper respiratory oxidase family.</text>
</comment>
<protein>
    <recommendedName>
        <fullName>Cytochrome bo(3) ubiquinol oxidase subunit 1</fullName>
        <ecNumber evidence="2">7.1.1.3</ecNumber>
    </recommendedName>
    <alternativeName>
        <fullName>Cytochrome o ubiquinol oxidase subunit 1</fullName>
        <shortName>Cytochrome o subunit 1</shortName>
    </alternativeName>
    <alternativeName>
        <fullName>Oxidase bo(3) subunit 1</fullName>
    </alternativeName>
    <alternativeName>
        <fullName>Ubiquinol oxidase chain A</fullName>
    </alternativeName>
    <alternativeName>
        <fullName>Ubiquinol oxidase polypeptide I</fullName>
    </alternativeName>
    <alternativeName>
        <fullName>Ubiquinol oxidase subunit 1</fullName>
    </alternativeName>
</protein>
<feature type="chain" id="PRO_0000183477" description="Cytochrome bo(3) ubiquinol oxidase subunit 1">
    <location>
        <begin position="1"/>
        <end position="663"/>
    </location>
</feature>
<feature type="topological domain" description="Periplasmic" evidence="1">
    <location>
        <begin position="1"/>
        <end position="16"/>
    </location>
</feature>
<feature type="transmembrane region" description="Helical; Name=I" evidence="1">
    <location>
        <begin position="17"/>
        <end position="35"/>
    </location>
</feature>
<feature type="topological domain" description="Cytoplasmic" evidence="1">
    <location>
        <begin position="36"/>
        <end position="52"/>
    </location>
</feature>
<feature type="transmembrane region" description="Helical; Name=II" evidence="1">
    <location>
        <begin position="53"/>
        <end position="80"/>
    </location>
</feature>
<feature type="topological domain" description="Periplasmic" evidence="1">
    <location>
        <begin position="81"/>
        <end position="95"/>
    </location>
</feature>
<feature type="transmembrane region" description="Helical; Name=III" evidence="1">
    <location>
        <begin position="96"/>
        <end position="132"/>
    </location>
</feature>
<feature type="topological domain" description="Cytoplasmic" evidence="1">
    <location>
        <begin position="133"/>
        <end position="137"/>
    </location>
</feature>
<feature type="transmembrane region" description="Helical; Name=IV" evidence="1">
    <location>
        <begin position="138"/>
        <end position="161"/>
    </location>
</feature>
<feature type="topological domain" description="Periplasmic" evidence="1">
    <location>
        <begin position="162"/>
        <end position="184"/>
    </location>
</feature>
<feature type="transmembrane region" description="Helical; Name=V" evidence="1">
    <location>
        <begin position="185"/>
        <end position="215"/>
    </location>
</feature>
<feature type="topological domain" description="Cytoplasmic" evidence="1">
    <location>
        <begin position="216"/>
        <end position="224"/>
    </location>
</feature>
<feature type="transmembrane region" description="Helical; Name=VI" evidence="1">
    <location>
        <begin position="225"/>
        <end position="260"/>
    </location>
</feature>
<feature type="topological domain" description="Periplasmic" evidence="1">
    <location>
        <begin position="261"/>
        <end position="270"/>
    </location>
</feature>
<feature type="transmembrane region" description="Helical; Name=VII" evidence="1">
    <location>
        <begin position="271"/>
        <end position="307"/>
    </location>
</feature>
<feature type="topological domain" description="Cytoplasmic" evidence="1">
    <location>
        <begin position="308"/>
        <end position="311"/>
    </location>
</feature>
<feature type="transmembrane region" description="Helical; Name=VIII" evidence="1">
    <location>
        <begin position="312"/>
        <end position="326"/>
    </location>
</feature>
<feature type="topological domain" description="Periplasmic" evidence="1">
    <location>
        <begin position="327"/>
        <end position="340"/>
    </location>
</feature>
<feature type="transmembrane region" description="Helical; Name=IX" evidence="1">
    <location>
        <begin position="341"/>
        <end position="369"/>
    </location>
</feature>
<feature type="topological domain" description="Cytoplasmic" evidence="1">
    <location>
        <begin position="370"/>
        <end position="377"/>
    </location>
</feature>
<feature type="transmembrane region" description="Helical; Name=X" evidence="1">
    <location>
        <begin position="378"/>
        <end position="409"/>
    </location>
</feature>
<feature type="topological domain" description="Periplasmic" evidence="1">
    <location>
        <begin position="410"/>
        <end position="412"/>
    </location>
</feature>
<feature type="transmembrane region" description="Helical; Name=XI" evidence="1">
    <location>
        <begin position="413"/>
        <end position="445"/>
    </location>
</feature>
<feature type="topological domain" description="Cytoplasmic" evidence="1">
    <location>
        <begin position="446"/>
        <end position="448"/>
    </location>
</feature>
<feature type="transmembrane region" description="Helical; Name=XII" evidence="1">
    <location>
        <begin position="449"/>
        <end position="477"/>
    </location>
</feature>
<feature type="topological domain" description="Periplasmic" evidence="1">
    <location>
        <begin position="478"/>
        <end position="489"/>
    </location>
</feature>
<feature type="transmembrane region" description="Helical; Name=XIII" evidence="1">
    <location>
        <begin position="490"/>
        <end position="521"/>
    </location>
</feature>
<feature type="topological domain" description="Cytoplasmic" evidence="1">
    <location>
        <begin position="522"/>
        <end position="587"/>
    </location>
</feature>
<feature type="transmembrane region" description="Helical; Name=XIV" evidence="1">
    <location>
        <begin position="588"/>
        <end position="606"/>
    </location>
</feature>
<feature type="topological domain" description="Periplasmic" evidence="1">
    <location>
        <begin position="607"/>
        <end position="613"/>
    </location>
</feature>
<feature type="transmembrane region" description="Helical; Name=XV" evidence="1">
    <location>
        <begin position="614"/>
        <end position="632"/>
    </location>
</feature>
<feature type="topological domain" description="Cytoplasmic" evidence="1">
    <location>
        <begin position="633"/>
        <end position="663"/>
    </location>
</feature>
<feature type="binding site" evidence="2">
    <location>
        <position position="71"/>
    </location>
    <ligand>
        <name>ubiquinone-8</name>
        <dbReference type="ChEBI" id="CHEBI:61683"/>
    </ligand>
</feature>
<feature type="binding site" evidence="2">
    <location>
        <position position="75"/>
    </location>
    <ligand>
        <name>ubiquinone-8</name>
        <dbReference type="ChEBI" id="CHEBI:61683"/>
    </ligand>
</feature>
<feature type="binding site" evidence="2">
    <location>
        <position position="98"/>
    </location>
    <ligand>
        <name>ubiquinone-8</name>
        <dbReference type="ChEBI" id="CHEBI:61683"/>
    </ligand>
</feature>
<feature type="binding site" description="axial binding residue" evidence="2">
    <location>
        <position position="106"/>
    </location>
    <ligand>
        <name>heme b</name>
        <dbReference type="ChEBI" id="CHEBI:60344"/>
    </ligand>
    <ligandPart>
        <name>Fe</name>
        <dbReference type="ChEBI" id="CHEBI:18248"/>
    </ligandPart>
</feature>
<feature type="binding site" evidence="2">
    <location>
        <position position="170"/>
    </location>
    <ligand>
        <name>heme b</name>
        <dbReference type="ChEBI" id="CHEBI:60344"/>
    </ligand>
</feature>
<feature type="binding site" evidence="2">
    <location>
        <position position="284"/>
    </location>
    <ligand>
        <name>Cu(2+)</name>
        <dbReference type="ChEBI" id="CHEBI:29036"/>
    </ligand>
</feature>
<feature type="binding site" evidence="2">
    <location>
        <position position="288"/>
    </location>
    <ligand>
        <name>Fe(II)-heme o</name>
        <dbReference type="ChEBI" id="CHEBI:60530"/>
    </ligand>
</feature>
<feature type="binding site" evidence="2">
    <location>
        <position position="333"/>
    </location>
    <ligand>
        <name>Cu(2+)</name>
        <dbReference type="ChEBI" id="CHEBI:29036"/>
    </ligand>
</feature>
<feature type="binding site" evidence="2">
    <location>
        <position position="334"/>
    </location>
    <ligand>
        <name>Cu(2+)</name>
        <dbReference type="ChEBI" id="CHEBI:29036"/>
    </ligand>
</feature>
<feature type="binding site" evidence="2">
    <location>
        <position position="411"/>
    </location>
    <ligand>
        <name>Fe(II)-heme o</name>
        <dbReference type="ChEBI" id="CHEBI:60530"/>
    </ligand>
</feature>
<feature type="binding site" description="axial binding residue" evidence="2">
    <location>
        <position position="419"/>
    </location>
    <ligand>
        <name>Fe(II)-heme o</name>
        <dbReference type="ChEBI" id="CHEBI:60530"/>
    </ligand>
    <ligandPart>
        <name>Fe</name>
        <dbReference type="ChEBI" id="CHEBI:18248"/>
    </ligandPart>
</feature>
<feature type="binding site" description="axial binding residue" evidence="2">
    <location>
        <position position="421"/>
    </location>
    <ligand>
        <name>heme b</name>
        <dbReference type="ChEBI" id="CHEBI:60344"/>
    </ligand>
    <ligandPart>
        <name>Fe</name>
        <dbReference type="ChEBI" id="CHEBI:18248"/>
    </ligandPart>
</feature>
<feature type="binding site" evidence="2">
    <location>
        <position position="481"/>
    </location>
    <ligand>
        <name>heme b</name>
        <dbReference type="ChEBI" id="CHEBI:60344"/>
    </ligand>
</feature>
<feature type="binding site" evidence="2">
    <location>
        <position position="482"/>
    </location>
    <ligand>
        <name>heme b</name>
        <dbReference type="ChEBI" id="CHEBI:60344"/>
    </ligand>
</feature>
<feature type="cross-link" description="1'-histidyl-3'-tyrosine (His-Tyr)" evidence="1">
    <location>
        <begin position="284"/>
        <end position="288"/>
    </location>
</feature>
<reference key="1">
    <citation type="journal article" date="2001" name="Nature">
        <title>Genome sequence of enterohaemorrhagic Escherichia coli O157:H7.</title>
        <authorList>
            <person name="Perna N.T."/>
            <person name="Plunkett G. III"/>
            <person name="Burland V."/>
            <person name="Mau B."/>
            <person name="Glasner J.D."/>
            <person name="Rose D.J."/>
            <person name="Mayhew G.F."/>
            <person name="Evans P.S."/>
            <person name="Gregor J."/>
            <person name="Kirkpatrick H.A."/>
            <person name="Posfai G."/>
            <person name="Hackett J."/>
            <person name="Klink S."/>
            <person name="Boutin A."/>
            <person name="Shao Y."/>
            <person name="Miller L."/>
            <person name="Grotbeck E.J."/>
            <person name="Davis N.W."/>
            <person name="Lim A."/>
            <person name="Dimalanta E.T."/>
            <person name="Potamousis K."/>
            <person name="Apodaca J."/>
            <person name="Anantharaman T.S."/>
            <person name="Lin J."/>
            <person name="Yen G."/>
            <person name="Schwartz D.C."/>
            <person name="Welch R.A."/>
            <person name="Blattner F.R."/>
        </authorList>
    </citation>
    <scope>NUCLEOTIDE SEQUENCE [LARGE SCALE GENOMIC DNA]</scope>
    <source>
        <strain>O157:H7 / EDL933 / ATCC 700927 / EHEC</strain>
    </source>
</reference>
<reference key="2">
    <citation type="journal article" date="2001" name="DNA Res.">
        <title>Complete genome sequence of enterohemorrhagic Escherichia coli O157:H7 and genomic comparison with a laboratory strain K-12.</title>
        <authorList>
            <person name="Hayashi T."/>
            <person name="Makino K."/>
            <person name="Ohnishi M."/>
            <person name="Kurokawa K."/>
            <person name="Ishii K."/>
            <person name="Yokoyama K."/>
            <person name="Han C.-G."/>
            <person name="Ohtsubo E."/>
            <person name="Nakayama K."/>
            <person name="Murata T."/>
            <person name="Tanaka M."/>
            <person name="Tobe T."/>
            <person name="Iida T."/>
            <person name="Takami H."/>
            <person name="Honda T."/>
            <person name="Sasakawa C."/>
            <person name="Ogasawara N."/>
            <person name="Yasunaga T."/>
            <person name="Kuhara S."/>
            <person name="Shiba T."/>
            <person name="Hattori M."/>
            <person name="Shinagawa H."/>
        </authorList>
    </citation>
    <scope>NUCLEOTIDE SEQUENCE [LARGE SCALE GENOMIC DNA]</scope>
    <source>
        <strain>O157:H7 / Sakai / RIMD 0509952 / EHEC</strain>
    </source>
</reference>
<proteinExistence type="inferred from homology"/>
<name>CYOB_ECO57</name>
<evidence type="ECO:0000250" key="1"/>
<evidence type="ECO:0000250" key="2">
    <source>
        <dbReference type="UniProtKB" id="P0ABI8"/>
    </source>
</evidence>
<evidence type="ECO:0000305" key="3"/>
<sequence>MFGKLSLDAVPFHEPIVMVTIAGIILGGLALVGLITYFGKWTYLWKEWLTSVDHKRLGIMYIIVAIVMLLRGFADAIMMRSQQALASAGEAGFLPPHHYDQIFTAHGVIMIFFVAMPFVIGLMNLVVPLQIGARDVAFPFLNNLSFWFTVVGVILVNVSLGVGEFAQTGWLAYPPLSGIEYSPGVGVDYWIWSLQLSGIGTTLTGINFFVTILKMRAPGMTMFKMPVFTWASLCANVLIIASFPILTVTVALLTLDRYLGTHFFTNDMGGNMMMYINLIWAWGHPEVYILILPVFGVFSEIAATFSRKRLFGYTSLVWATVCITVLSFIVWLHHFFTMGAGANVNAFFGITTMIIAIPTGVKIFNWLFTMYQGRIVFHSAMLWTIGFIVTFSVGGMTGVLLAVPGADFVLHNSLFLIAHFHNVIIGGVVFGCFAGMTYWWPKAFGFKLNETWGKRAFWFWIIGFFVAFMPLYALGFMGMTRRLSQQIDPQFHTMLMIAASGAVLIALGILCLVIQMYVSIRDRDQNRDLTGDPWGGRTLEWATSSPPPFYNFAVVPHVHERDAFWEMKEKGEAYKKPDHYEEIHMPKNSGAGIVIAAFSTIFGFAMIWHIWWLAIVGFAGMIITWIVKSFDEDVDYYVPVAEIEKLENQHFDEITKAGLKNGN</sequence>
<keyword id="KW-0997">Cell inner membrane</keyword>
<keyword id="KW-1003">Cell membrane</keyword>
<keyword id="KW-0186">Copper</keyword>
<keyword id="KW-0249">Electron transport</keyword>
<keyword id="KW-0349">Heme</keyword>
<keyword id="KW-0375">Hydrogen ion transport</keyword>
<keyword id="KW-0406">Ion transport</keyword>
<keyword id="KW-0408">Iron</keyword>
<keyword id="KW-0472">Membrane</keyword>
<keyword id="KW-0479">Metal-binding</keyword>
<keyword id="KW-1185">Reference proteome</keyword>
<keyword id="KW-0679">Respiratory chain</keyword>
<keyword id="KW-1278">Translocase</keyword>
<keyword id="KW-0812">Transmembrane</keyword>
<keyword id="KW-1133">Transmembrane helix</keyword>
<keyword id="KW-0813">Transport</keyword>